<organism>
    <name type="scientific">Neisseria gonorrhoeae (strain ATCC 700825 / FA 1090)</name>
    <dbReference type="NCBI Taxonomy" id="242231"/>
    <lineage>
        <taxon>Bacteria</taxon>
        <taxon>Pseudomonadati</taxon>
        <taxon>Pseudomonadota</taxon>
        <taxon>Betaproteobacteria</taxon>
        <taxon>Neisseriales</taxon>
        <taxon>Neisseriaceae</taxon>
        <taxon>Neisseria</taxon>
    </lineage>
</organism>
<protein>
    <recommendedName>
        <fullName evidence="1">Lipid-A-disaccharide synthase</fullName>
        <ecNumber evidence="1">2.4.1.182</ecNumber>
    </recommendedName>
</protein>
<sequence length="390" mass="43064">MWGQTNMVDKKSPLIAVSVGEASGDLLGAHLIRAIRKRCPQARLTGIGGELMKAEGFESLYDQERLAVRGFVEVVRRLPEILRIRRELVRDLLSLKPDVFVGIDAPDFNLGVAEKLKRAGIPTLHYVSPSVWAWRRERVGKIVHQVNRVLCLFPMEPQLYLDAGGRAEFVGHPMAQLMPLEDDRETARKTLGADVGIPVFALLPGSRVSEIDYMAPVFFQTALLLLERYPAARFLLPAATEATKRRLAEVLQRPEFAGLALTVTDRQSETVCRAADAVLVTSGTATLEVALCKRPMVISYKISPLTYAYVKRKIKVPHVGLPNILLGKEAVPELLQSEAKPEKLAAALADWYEHPDKVAALQQDFGALHLLLKKDTADLAARAVLEEAGC</sequence>
<gene>
    <name evidence="1" type="primary">lpxB</name>
    <name type="ordered locus">NGO_1782</name>
</gene>
<dbReference type="EC" id="2.4.1.182" evidence="1"/>
<dbReference type="EMBL" id="AE004969">
    <property type="protein sequence ID" value="AAW90401.1"/>
    <property type="molecule type" value="Genomic_DNA"/>
</dbReference>
<dbReference type="RefSeq" id="WP_003689999.1">
    <property type="nucleotide sequence ID" value="NC_002946.2"/>
</dbReference>
<dbReference type="RefSeq" id="YP_208813.1">
    <property type="nucleotide sequence ID" value="NC_002946.2"/>
</dbReference>
<dbReference type="SMR" id="Q5F5Y6"/>
<dbReference type="STRING" id="242231.NGO_1782"/>
<dbReference type="CAZy" id="GT19">
    <property type="family name" value="Glycosyltransferase Family 19"/>
</dbReference>
<dbReference type="GeneID" id="66754358"/>
<dbReference type="KEGG" id="ngo:NGO_1782"/>
<dbReference type="PATRIC" id="fig|242231.10.peg.2140"/>
<dbReference type="HOGENOM" id="CLU_036577_3_0_4"/>
<dbReference type="UniPathway" id="UPA00973"/>
<dbReference type="Proteomes" id="UP000000535">
    <property type="component" value="Chromosome"/>
</dbReference>
<dbReference type="GO" id="GO:0016020">
    <property type="term" value="C:membrane"/>
    <property type="evidence" value="ECO:0007669"/>
    <property type="project" value="GOC"/>
</dbReference>
<dbReference type="GO" id="GO:0008915">
    <property type="term" value="F:lipid-A-disaccharide synthase activity"/>
    <property type="evidence" value="ECO:0007669"/>
    <property type="project" value="UniProtKB-UniRule"/>
</dbReference>
<dbReference type="GO" id="GO:0005543">
    <property type="term" value="F:phospholipid binding"/>
    <property type="evidence" value="ECO:0007669"/>
    <property type="project" value="TreeGrafter"/>
</dbReference>
<dbReference type="GO" id="GO:0009245">
    <property type="term" value="P:lipid A biosynthetic process"/>
    <property type="evidence" value="ECO:0007669"/>
    <property type="project" value="UniProtKB-UniRule"/>
</dbReference>
<dbReference type="HAMAP" id="MF_00392">
    <property type="entry name" value="LpxB"/>
    <property type="match status" value="1"/>
</dbReference>
<dbReference type="InterPro" id="IPR003835">
    <property type="entry name" value="Glyco_trans_19"/>
</dbReference>
<dbReference type="NCBIfam" id="TIGR00215">
    <property type="entry name" value="lpxB"/>
    <property type="match status" value="1"/>
</dbReference>
<dbReference type="PANTHER" id="PTHR30372">
    <property type="entry name" value="LIPID-A-DISACCHARIDE SYNTHASE"/>
    <property type="match status" value="1"/>
</dbReference>
<dbReference type="PANTHER" id="PTHR30372:SF4">
    <property type="entry name" value="LIPID-A-DISACCHARIDE SYNTHASE, MITOCHONDRIAL-RELATED"/>
    <property type="match status" value="1"/>
</dbReference>
<dbReference type="Pfam" id="PF02684">
    <property type="entry name" value="LpxB"/>
    <property type="match status" value="1"/>
</dbReference>
<dbReference type="SUPFAM" id="SSF53756">
    <property type="entry name" value="UDP-Glycosyltransferase/glycogen phosphorylase"/>
    <property type="match status" value="1"/>
</dbReference>
<keyword id="KW-0328">Glycosyltransferase</keyword>
<keyword id="KW-0441">Lipid A biosynthesis</keyword>
<keyword id="KW-0444">Lipid biosynthesis</keyword>
<keyword id="KW-0443">Lipid metabolism</keyword>
<keyword id="KW-1185">Reference proteome</keyword>
<keyword id="KW-0808">Transferase</keyword>
<name>LPXB_NEIG1</name>
<feature type="chain" id="PRO_0000255200" description="Lipid-A-disaccharide synthase">
    <location>
        <begin position="1"/>
        <end position="390"/>
    </location>
</feature>
<evidence type="ECO:0000255" key="1">
    <source>
        <dbReference type="HAMAP-Rule" id="MF_00392"/>
    </source>
</evidence>
<accession>Q5F5Y6</accession>
<comment type="function">
    <text evidence="1">Condensation of UDP-2,3-diacylglucosamine and 2,3-diacylglucosamine-1-phosphate to form lipid A disaccharide, a precursor of lipid A, a phosphorylated glycolipid that anchors the lipopolysaccharide to the outer membrane of the cell.</text>
</comment>
<comment type="catalytic activity">
    <reaction evidence="1">
        <text>a lipid X + a UDP-2-N,3-O-bis[(3R)-3-hydroxyacyl]-alpha-D-glucosamine = a lipid A disaccharide + UDP + H(+)</text>
        <dbReference type="Rhea" id="RHEA:67828"/>
        <dbReference type="ChEBI" id="CHEBI:15378"/>
        <dbReference type="ChEBI" id="CHEBI:58223"/>
        <dbReference type="ChEBI" id="CHEBI:137748"/>
        <dbReference type="ChEBI" id="CHEBI:176338"/>
        <dbReference type="ChEBI" id="CHEBI:176343"/>
        <dbReference type="EC" id="2.4.1.182"/>
    </reaction>
</comment>
<comment type="pathway">
    <text evidence="1">Bacterial outer membrane biogenesis; LPS lipid A biosynthesis.</text>
</comment>
<comment type="similarity">
    <text evidence="1">Belongs to the LpxB family.</text>
</comment>
<proteinExistence type="inferred from homology"/>
<reference key="1">
    <citation type="submission" date="2003-03" db="EMBL/GenBank/DDBJ databases">
        <title>The complete genome sequence of Neisseria gonorrhoeae.</title>
        <authorList>
            <person name="Lewis L.A."/>
            <person name="Gillaspy A.F."/>
            <person name="McLaughlin R.E."/>
            <person name="Gipson M."/>
            <person name="Ducey T.F."/>
            <person name="Ownbey T."/>
            <person name="Hartman K."/>
            <person name="Nydick C."/>
            <person name="Carson M.B."/>
            <person name="Vaughn J."/>
            <person name="Thomson C."/>
            <person name="Song L."/>
            <person name="Lin S."/>
            <person name="Yuan X."/>
            <person name="Najar F."/>
            <person name="Zhan M."/>
            <person name="Ren Q."/>
            <person name="Zhu H."/>
            <person name="Qi S."/>
            <person name="Kenton S.M."/>
            <person name="Lai H."/>
            <person name="White J.D."/>
            <person name="Clifton S."/>
            <person name="Roe B.A."/>
            <person name="Dyer D.W."/>
        </authorList>
    </citation>
    <scope>NUCLEOTIDE SEQUENCE [LARGE SCALE GENOMIC DNA]</scope>
    <source>
        <strain>ATCC 700825 / FA 1090</strain>
    </source>
</reference>